<comment type="function">
    <text evidence="1">RNaseP catalyzes the removal of the 5'-leader sequence from pre-tRNA to produce the mature 5'-terminus. It can also cleave other RNA substrates such as 4.5S RNA. The protein component plays an auxiliary but essential role in vivo by binding to the 5'-leader sequence and broadening the substrate specificity of the ribozyme.</text>
</comment>
<comment type="catalytic activity">
    <reaction evidence="1">
        <text>Endonucleolytic cleavage of RNA, removing 5'-extranucleotides from tRNA precursor.</text>
        <dbReference type="EC" id="3.1.26.5"/>
    </reaction>
</comment>
<comment type="subunit">
    <text evidence="1">Consists of a catalytic RNA component (M1 or rnpB) and a protein subunit.</text>
</comment>
<comment type="similarity">
    <text evidence="1">Belongs to the RnpA family.</text>
</comment>
<keyword id="KW-0255">Endonuclease</keyword>
<keyword id="KW-0378">Hydrolase</keyword>
<keyword id="KW-0540">Nuclease</keyword>
<keyword id="KW-0694">RNA-binding</keyword>
<keyword id="KW-0819">tRNA processing</keyword>
<organism>
    <name type="scientific">Parasynechococcus marenigrum (strain WH8102)</name>
    <dbReference type="NCBI Taxonomy" id="84588"/>
    <lineage>
        <taxon>Bacteria</taxon>
        <taxon>Bacillati</taxon>
        <taxon>Cyanobacteriota</taxon>
        <taxon>Cyanophyceae</taxon>
        <taxon>Synechococcales</taxon>
        <taxon>Prochlorococcaceae</taxon>
        <taxon>Parasynechococcus</taxon>
        <taxon>Parasynechococcus marenigrum</taxon>
    </lineage>
</organism>
<sequence>MALPASMRLRGHRCFNRLHRIGRRHHGDWMVLRVMPEEPRLLRPELRRHPTRCCRCALVISSKVSKRAVRRNRLRRLLHQHLRQQLEHRGDLAGRWVLISLRPEASEAEPSQLLEECDSLLSSAGLGQ</sequence>
<dbReference type="EC" id="3.1.26.5" evidence="1"/>
<dbReference type="EMBL" id="BX569694">
    <property type="protein sequence ID" value="CAE08403.1"/>
    <property type="molecule type" value="Genomic_DNA"/>
</dbReference>
<dbReference type="RefSeq" id="WP_011128746.1">
    <property type="nucleotide sequence ID" value="NC_005070.1"/>
</dbReference>
<dbReference type="SMR" id="Q7U524"/>
<dbReference type="STRING" id="84588.SYNW1888"/>
<dbReference type="KEGG" id="syw:SYNW1888"/>
<dbReference type="eggNOG" id="COG0594">
    <property type="taxonomic scope" value="Bacteria"/>
</dbReference>
<dbReference type="HOGENOM" id="CLU_117179_2_0_3"/>
<dbReference type="Proteomes" id="UP000001422">
    <property type="component" value="Chromosome"/>
</dbReference>
<dbReference type="GO" id="GO:0030677">
    <property type="term" value="C:ribonuclease P complex"/>
    <property type="evidence" value="ECO:0007669"/>
    <property type="project" value="TreeGrafter"/>
</dbReference>
<dbReference type="GO" id="GO:0042781">
    <property type="term" value="F:3'-tRNA processing endoribonuclease activity"/>
    <property type="evidence" value="ECO:0007669"/>
    <property type="project" value="TreeGrafter"/>
</dbReference>
<dbReference type="GO" id="GO:0004526">
    <property type="term" value="F:ribonuclease P activity"/>
    <property type="evidence" value="ECO:0007669"/>
    <property type="project" value="UniProtKB-UniRule"/>
</dbReference>
<dbReference type="GO" id="GO:0000049">
    <property type="term" value="F:tRNA binding"/>
    <property type="evidence" value="ECO:0007669"/>
    <property type="project" value="UniProtKB-UniRule"/>
</dbReference>
<dbReference type="GO" id="GO:0001682">
    <property type="term" value="P:tRNA 5'-leader removal"/>
    <property type="evidence" value="ECO:0007669"/>
    <property type="project" value="UniProtKB-UniRule"/>
</dbReference>
<dbReference type="Gene3D" id="3.30.230.10">
    <property type="match status" value="1"/>
</dbReference>
<dbReference type="HAMAP" id="MF_00227">
    <property type="entry name" value="RNase_P"/>
    <property type="match status" value="1"/>
</dbReference>
<dbReference type="InterPro" id="IPR020568">
    <property type="entry name" value="Ribosomal_Su5_D2-typ_SF"/>
</dbReference>
<dbReference type="InterPro" id="IPR014721">
    <property type="entry name" value="Ribsml_uS5_D2-typ_fold_subgr"/>
</dbReference>
<dbReference type="InterPro" id="IPR000100">
    <property type="entry name" value="RNase_P"/>
</dbReference>
<dbReference type="PANTHER" id="PTHR33992">
    <property type="entry name" value="RIBONUCLEASE P PROTEIN COMPONENT"/>
    <property type="match status" value="1"/>
</dbReference>
<dbReference type="PANTHER" id="PTHR33992:SF1">
    <property type="entry name" value="RIBONUCLEASE P PROTEIN COMPONENT"/>
    <property type="match status" value="1"/>
</dbReference>
<dbReference type="Pfam" id="PF00825">
    <property type="entry name" value="Ribonuclease_P"/>
    <property type="match status" value="1"/>
</dbReference>
<dbReference type="SUPFAM" id="SSF54211">
    <property type="entry name" value="Ribosomal protein S5 domain 2-like"/>
    <property type="match status" value="1"/>
</dbReference>
<proteinExistence type="inferred from homology"/>
<name>RNPA_PARMW</name>
<accession>Q7U524</accession>
<evidence type="ECO:0000255" key="1">
    <source>
        <dbReference type="HAMAP-Rule" id="MF_00227"/>
    </source>
</evidence>
<protein>
    <recommendedName>
        <fullName evidence="1">Ribonuclease P protein component</fullName>
        <shortName evidence="1">RNase P protein</shortName>
        <shortName evidence="1">RNaseP protein</shortName>
        <ecNumber evidence="1">3.1.26.5</ecNumber>
    </recommendedName>
    <alternativeName>
        <fullName evidence="1">Protein C5</fullName>
    </alternativeName>
</protein>
<feature type="chain" id="PRO_0000198550" description="Ribonuclease P protein component">
    <location>
        <begin position="1"/>
        <end position="128"/>
    </location>
</feature>
<gene>
    <name evidence="1" type="primary">rnpA</name>
    <name type="ordered locus">SYNW1888</name>
</gene>
<reference key="1">
    <citation type="journal article" date="2003" name="Nature">
        <title>The genome of a motile marine Synechococcus.</title>
        <authorList>
            <person name="Palenik B."/>
            <person name="Brahamsha B."/>
            <person name="Larimer F.W."/>
            <person name="Land M.L."/>
            <person name="Hauser L."/>
            <person name="Chain P."/>
            <person name="Lamerdin J.E."/>
            <person name="Regala W."/>
            <person name="Allen E.E."/>
            <person name="McCarren J."/>
            <person name="Paulsen I.T."/>
            <person name="Dufresne A."/>
            <person name="Partensky F."/>
            <person name="Webb E.A."/>
            <person name="Waterbury J."/>
        </authorList>
    </citation>
    <scope>NUCLEOTIDE SEQUENCE [LARGE SCALE GENOMIC DNA]</scope>
    <source>
        <strain>WH8102</strain>
    </source>
</reference>